<name>SSTT_PASMU</name>
<keyword id="KW-0029">Amino-acid transport</keyword>
<keyword id="KW-0997">Cell inner membrane</keyword>
<keyword id="KW-1003">Cell membrane</keyword>
<keyword id="KW-0472">Membrane</keyword>
<keyword id="KW-1185">Reference proteome</keyword>
<keyword id="KW-0769">Symport</keyword>
<keyword id="KW-0812">Transmembrane</keyword>
<keyword id="KW-1133">Transmembrane helix</keyword>
<keyword id="KW-0813">Transport</keyword>
<protein>
    <recommendedName>
        <fullName evidence="1">Serine/threonine transporter SstT</fullName>
    </recommendedName>
    <alternativeName>
        <fullName evidence="1">Na(+)/serine-threonine symporter</fullName>
    </alternativeName>
</protein>
<gene>
    <name evidence="1" type="primary">sstT</name>
    <name type="ordered locus">PM0891</name>
</gene>
<evidence type="ECO:0000255" key="1">
    <source>
        <dbReference type="HAMAP-Rule" id="MF_01582"/>
    </source>
</evidence>
<feature type="chain" id="PRO_0000309103" description="Serine/threonine transporter SstT">
    <location>
        <begin position="1"/>
        <end position="413"/>
    </location>
</feature>
<feature type="transmembrane region" description="Helical" evidence="1">
    <location>
        <begin position="19"/>
        <end position="39"/>
    </location>
</feature>
<feature type="transmembrane region" description="Helical" evidence="1">
    <location>
        <begin position="61"/>
        <end position="81"/>
    </location>
</feature>
<feature type="transmembrane region" description="Helical" evidence="1">
    <location>
        <begin position="89"/>
        <end position="109"/>
    </location>
</feature>
<feature type="transmembrane region" description="Helical" evidence="1">
    <location>
        <begin position="148"/>
        <end position="168"/>
    </location>
</feature>
<feature type="transmembrane region" description="Helical" evidence="1">
    <location>
        <begin position="189"/>
        <end position="209"/>
    </location>
</feature>
<feature type="transmembrane region" description="Helical" evidence="1">
    <location>
        <begin position="223"/>
        <end position="243"/>
    </location>
</feature>
<feature type="transmembrane region" description="Helical" evidence="1">
    <location>
        <begin position="297"/>
        <end position="317"/>
    </location>
</feature>
<feature type="transmembrane region" description="Helical" evidence="1">
    <location>
        <begin position="325"/>
        <end position="345"/>
    </location>
</feature>
<organism>
    <name type="scientific">Pasteurella multocida (strain Pm70)</name>
    <dbReference type="NCBI Taxonomy" id="272843"/>
    <lineage>
        <taxon>Bacteria</taxon>
        <taxon>Pseudomonadati</taxon>
        <taxon>Pseudomonadota</taxon>
        <taxon>Gammaproteobacteria</taxon>
        <taxon>Pasteurellales</taxon>
        <taxon>Pasteurellaceae</taxon>
        <taxon>Pasteurella</taxon>
    </lineage>
</organism>
<reference key="1">
    <citation type="journal article" date="2001" name="Proc. Natl. Acad. Sci. U.S.A.">
        <title>Complete genomic sequence of Pasteurella multocida Pm70.</title>
        <authorList>
            <person name="May B.J."/>
            <person name="Zhang Q."/>
            <person name="Li L.L."/>
            <person name="Paustian M.L."/>
            <person name="Whittam T.S."/>
            <person name="Kapur V."/>
        </authorList>
    </citation>
    <scope>NUCLEOTIDE SEQUENCE [LARGE SCALE GENOMIC DNA]</scope>
    <source>
        <strain>Pm70</strain>
    </source>
</reference>
<dbReference type="EMBL" id="AE004439">
    <property type="protein sequence ID" value="AAK02975.1"/>
    <property type="molecule type" value="Genomic_DNA"/>
</dbReference>
<dbReference type="RefSeq" id="WP_005722751.1">
    <property type="nucleotide sequence ID" value="NC_002663.1"/>
</dbReference>
<dbReference type="SMR" id="Q9CMD9"/>
<dbReference type="STRING" id="272843.PM0891"/>
<dbReference type="EnsemblBacteria" id="AAK02975">
    <property type="protein sequence ID" value="AAK02975"/>
    <property type="gene ID" value="PM0891"/>
</dbReference>
<dbReference type="KEGG" id="pmu:PM0891"/>
<dbReference type="HOGENOM" id="CLU_044581_0_0_6"/>
<dbReference type="OrthoDB" id="9768885at2"/>
<dbReference type="Proteomes" id="UP000000809">
    <property type="component" value="Chromosome"/>
</dbReference>
<dbReference type="GO" id="GO:0005886">
    <property type="term" value="C:plasma membrane"/>
    <property type="evidence" value="ECO:0007669"/>
    <property type="project" value="UniProtKB-SubCell"/>
</dbReference>
<dbReference type="GO" id="GO:0005295">
    <property type="term" value="F:neutral L-amino acid:sodium symporter activity"/>
    <property type="evidence" value="ECO:0007669"/>
    <property type="project" value="TreeGrafter"/>
</dbReference>
<dbReference type="GO" id="GO:0032329">
    <property type="term" value="P:serine transport"/>
    <property type="evidence" value="ECO:0007669"/>
    <property type="project" value="InterPro"/>
</dbReference>
<dbReference type="GO" id="GO:0015826">
    <property type="term" value="P:threonine transport"/>
    <property type="evidence" value="ECO:0007669"/>
    <property type="project" value="InterPro"/>
</dbReference>
<dbReference type="FunFam" id="1.10.3860.10:FF:000003">
    <property type="entry name" value="Serine/threonine transporter sstT"/>
    <property type="match status" value="1"/>
</dbReference>
<dbReference type="Gene3D" id="1.10.3860.10">
    <property type="entry name" value="Sodium:dicarboxylate symporter"/>
    <property type="match status" value="1"/>
</dbReference>
<dbReference type="HAMAP" id="MF_01582">
    <property type="entry name" value="Ser_Thr_transp_SstT"/>
    <property type="match status" value="1"/>
</dbReference>
<dbReference type="InterPro" id="IPR001991">
    <property type="entry name" value="Na-dicarboxylate_symporter"/>
</dbReference>
<dbReference type="InterPro" id="IPR036458">
    <property type="entry name" value="Na:dicarbo_symporter_sf"/>
</dbReference>
<dbReference type="InterPro" id="IPR023025">
    <property type="entry name" value="Ser_Thr_transp_SstT"/>
</dbReference>
<dbReference type="NCBIfam" id="NF010151">
    <property type="entry name" value="PRK13628.1"/>
    <property type="match status" value="1"/>
</dbReference>
<dbReference type="PANTHER" id="PTHR42865">
    <property type="entry name" value="PROTON/GLUTAMATE-ASPARTATE SYMPORTER"/>
    <property type="match status" value="1"/>
</dbReference>
<dbReference type="PANTHER" id="PTHR42865:SF8">
    <property type="entry name" value="SERINE_THREONINE TRANSPORTER SSTT"/>
    <property type="match status" value="1"/>
</dbReference>
<dbReference type="Pfam" id="PF00375">
    <property type="entry name" value="SDF"/>
    <property type="match status" value="1"/>
</dbReference>
<dbReference type="PRINTS" id="PR00173">
    <property type="entry name" value="EDTRNSPORT"/>
</dbReference>
<dbReference type="SUPFAM" id="SSF118215">
    <property type="entry name" value="Proton glutamate symport protein"/>
    <property type="match status" value="1"/>
</dbReference>
<accession>Q9CMD9</accession>
<sequence length="413" mass="43423">MNTSRLFSLFFQGNLVKRIFIGLILGLLVALVTPTLQNVLGFNLAEKVGVLGTIFVRSLRAVAPILIFVLVMAAIANKKIGAKSNMKSIIVLYLLGTFLAALSAVIAGFLFPSEVALATKEDMTSAPQGVGQVLLTLVFNVVDNPLNALFKANFVGVLAWSIGLGLALRHASESTKTMVSDLAEAVSKIVYVIIAFAPIGVFGLVSETLADKGLVALGGYIHLLAVLVGTMLFVAFVVNPILVYWKIRRNPYPLVWTCVRESGLTAFFTRSSAANIPVNINLAKRLNLDEETYSVSIPLGATINMAGAAITVTILTLAAVHTLDIQISFFSALLLSVVASICACGASGVAGGSLLLIPLACSLFGVSDDVAAQMIGVGFIIGILQDSTETALNSSTDVLFTAAACIAEENKQV</sequence>
<comment type="function">
    <text evidence="1">Involved in the import of serine and threonine into the cell, with the concomitant import of sodium (symport system).</text>
</comment>
<comment type="catalytic activity">
    <reaction evidence="1">
        <text>L-serine(in) + Na(+)(in) = L-serine(out) + Na(+)(out)</text>
        <dbReference type="Rhea" id="RHEA:29575"/>
        <dbReference type="ChEBI" id="CHEBI:29101"/>
        <dbReference type="ChEBI" id="CHEBI:33384"/>
    </reaction>
    <physiologicalReaction direction="right-to-left" evidence="1">
        <dbReference type="Rhea" id="RHEA:29577"/>
    </physiologicalReaction>
</comment>
<comment type="catalytic activity">
    <reaction evidence="1">
        <text>L-threonine(in) + Na(+)(in) = L-threonine(out) + Na(+)(out)</text>
        <dbReference type="Rhea" id="RHEA:69999"/>
        <dbReference type="ChEBI" id="CHEBI:29101"/>
        <dbReference type="ChEBI" id="CHEBI:57926"/>
    </reaction>
    <physiologicalReaction direction="right-to-left" evidence="1">
        <dbReference type="Rhea" id="RHEA:70001"/>
    </physiologicalReaction>
</comment>
<comment type="subcellular location">
    <subcellularLocation>
        <location evidence="1">Cell inner membrane</location>
        <topology evidence="1">Multi-pass membrane protein</topology>
    </subcellularLocation>
</comment>
<comment type="similarity">
    <text evidence="1">Belongs to the dicarboxylate/amino acid:cation symporter (DAACS) (TC 2.A.23) family.</text>
</comment>
<proteinExistence type="inferred from homology"/>